<proteinExistence type="inferred from homology"/>
<accession>Q46IR1</accession>
<feature type="chain" id="PRO_0000272799" description="Large ribosomal subunit protein uL23">
    <location>
        <begin position="1"/>
        <end position="103"/>
    </location>
</feature>
<sequence>MTKFFEKRLTDVIKRPLITEKATKALDLNQYTFEVDPRAAKPDIKAAVEKMFDVKVLGISTMNPPRKSRRVGRFSGKRPQVKKAVVRLAEGNSIQLFPESEEA</sequence>
<comment type="function">
    <text evidence="1">One of the early assembly proteins it binds 23S rRNA. One of the proteins that surrounds the polypeptide exit tunnel on the outside of the ribosome. Forms the main docking site for trigger factor binding to the ribosome.</text>
</comment>
<comment type="subunit">
    <text evidence="1">Part of the 50S ribosomal subunit. Contacts protein L29, and trigger factor when it is bound to the ribosome.</text>
</comment>
<comment type="similarity">
    <text evidence="1">Belongs to the universal ribosomal protein uL23 family.</text>
</comment>
<organism>
    <name type="scientific">Prochlorococcus marinus (strain NATL2A)</name>
    <dbReference type="NCBI Taxonomy" id="59920"/>
    <lineage>
        <taxon>Bacteria</taxon>
        <taxon>Bacillati</taxon>
        <taxon>Cyanobacteriota</taxon>
        <taxon>Cyanophyceae</taxon>
        <taxon>Synechococcales</taxon>
        <taxon>Prochlorococcaceae</taxon>
        <taxon>Prochlorococcus</taxon>
    </lineage>
</organism>
<protein>
    <recommendedName>
        <fullName evidence="1">Large ribosomal subunit protein uL23</fullName>
    </recommendedName>
    <alternativeName>
        <fullName evidence="2">50S ribosomal protein L23</fullName>
    </alternativeName>
</protein>
<dbReference type="EMBL" id="CP000095">
    <property type="protein sequence ID" value="AAZ58617.1"/>
    <property type="molecule type" value="Genomic_DNA"/>
</dbReference>
<dbReference type="RefSeq" id="WP_011295471.1">
    <property type="nucleotide sequence ID" value="NC_007335.2"/>
</dbReference>
<dbReference type="SMR" id="Q46IR1"/>
<dbReference type="STRING" id="59920.PMN2A_1127"/>
<dbReference type="KEGG" id="pmn:PMN2A_1127"/>
<dbReference type="HOGENOM" id="CLU_037562_3_2_3"/>
<dbReference type="OrthoDB" id="9793353at2"/>
<dbReference type="PhylomeDB" id="Q46IR1"/>
<dbReference type="Proteomes" id="UP000002535">
    <property type="component" value="Chromosome"/>
</dbReference>
<dbReference type="GO" id="GO:1990904">
    <property type="term" value="C:ribonucleoprotein complex"/>
    <property type="evidence" value="ECO:0007669"/>
    <property type="project" value="UniProtKB-KW"/>
</dbReference>
<dbReference type="GO" id="GO:0005840">
    <property type="term" value="C:ribosome"/>
    <property type="evidence" value="ECO:0007669"/>
    <property type="project" value="UniProtKB-KW"/>
</dbReference>
<dbReference type="GO" id="GO:0019843">
    <property type="term" value="F:rRNA binding"/>
    <property type="evidence" value="ECO:0007669"/>
    <property type="project" value="UniProtKB-UniRule"/>
</dbReference>
<dbReference type="GO" id="GO:0003735">
    <property type="term" value="F:structural constituent of ribosome"/>
    <property type="evidence" value="ECO:0007669"/>
    <property type="project" value="InterPro"/>
</dbReference>
<dbReference type="GO" id="GO:0006412">
    <property type="term" value="P:translation"/>
    <property type="evidence" value="ECO:0007669"/>
    <property type="project" value="UniProtKB-UniRule"/>
</dbReference>
<dbReference type="FunFam" id="3.30.70.330:FF:000001">
    <property type="entry name" value="50S ribosomal protein L23"/>
    <property type="match status" value="1"/>
</dbReference>
<dbReference type="Gene3D" id="3.30.70.330">
    <property type="match status" value="1"/>
</dbReference>
<dbReference type="HAMAP" id="MF_01369_B">
    <property type="entry name" value="Ribosomal_uL23_B"/>
    <property type="match status" value="1"/>
</dbReference>
<dbReference type="InterPro" id="IPR012677">
    <property type="entry name" value="Nucleotide-bd_a/b_plait_sf"/>
</dbReference>
<dbReference type="InterPro" id="IPR013025">
    <property type="entry name" value="Ribosomal_uL23-like"/>
</dbReference>
<dbReference type="InterPro" id="IPR012678">
    <property type="entry name" value="Ribosomal_uL23/eL15/eS24_sf"/>
</dbReference>
<dbReference type="InterPro" id="IPR001014">
    <property type="entry name" value="Ribosomal_uL23_CS"/>
</dbReference>
<dbReference type="NCBIfam" id="NF004359">
    <property type="entry name" value="PRK05738.1-3"/>
    <property type="match status" value="1"/>
</dbReference>
<dbReference type="NCBIfam" id="NF004363">
    <property type="entry name" value="PRK05738.2-4"/>
    <property type="match status" value="1"/>
</dbReference>
<dbReference type="NCBIfam" id="NF004365">
    <property type="entry name" value="PRK05738.3-1"/>
    <property type="match status" value="1"/>
</dbReference>
<dbReference type="NCBIfam" id="NF004366">
    <property type="entry name" value="PRK05738.3-2"/>
    <property type="match status" value="1"/>
</dbReference>
<dbReference type="NCBIfam" id="NF004368">
    <property type="entry name" value="PRK05738.3-4"/>
    <property type="match status" value="1"/>
</dbReference>
<dbReference type="PANTHER" id="PTHR11620">
    <property type="entry name" value="60S RIBOSOMAL PROTEIN L23A"/>
    <property type="match status" value="1"/>
</dbReference>
<dbReference type="Pfam" id="PF00276">
    <property type="entry name" value="Ribosomal_L23"/>
    <property type="match status" value="1"/>
</dbReference>
<dbReference type="SUPFAM" id="SSF54189">
    <property type="entry name" value="Ribosomal proteins S24e, L23 and L15e"/>
    <property type="match status" value="1"/>
</dbReference>
<dbReference type="PROSITE" id="PS00050">
    <property type="entry name" value="RIBOSOMAL_L23"/>
    <property type="match status" value="1"/>
</dbReference>
<reference key="1">
    <citation type="journal article" date="2007" name="PLoS Genet.">
        <title>Patterns and implications of gene gain and loss in the evolution of Prochlorococcus.</title>
        <authorList>
            <person name="Kettler G.C."/>
            <person name="Martiny A.C."/>
            <person name="Huang K."/>
            <person name="Zucker J."/>
            <person name="Coleman M.L."/>
            <person name="Rodrigue S."/>
            <person name="Chen F."/>
            <person name="Lapidus A."/>
            <person name="Ferriera S."/>
            <person name="Johnson J."/>
            <person name="Steglich C."/>
            <person name="Church G.M."/>
            <person name="Richardson P."/>
            <person name="Chisholm S.W."/>
        </authorList>
    </citation>
    <scope>NUCLEOTIDE SEQUENCE [LARGE SCALE GENOMIC DNA]</scope>
    <source>
        <strain>NATL2A</strain>
    </source>
</reference>
<name>RL23_PROMT</name>
<keyword id="KW-1185">Reference proteome</keyword>
<keyword id="KW-0687">Ribonucleoprotein</keyword>
<keyword id="KW-0689">Ribosomal protein</keyword>
<keyword id="KW-0694">RNA-binding</keyword>
<keyword id="KW-0699">rRNA-binding</keyword>
<evidence type="ECO:0000255" key="1">
    <source>
        <dbReference type="HAMAP-Rule" id="MF_01369"/>
    </source>
</evidence>
<evidence type="ECO:0000305" key="2"/>
<gene>
    <name evidence="1" type="primary">rplW</name>
    <name evidence="1" type="synonym">rpl23</name>
    <name type="ordered locus">PMN2A_1127</name>
</gene>